<accession>Q8RWM6</accession>
<accession>Q9SFE6</accession>
<organism>
    <name type="scientific">Arabidopsis thaliana</name>
    <name type="common">Mouse-ear cress</name>
    <dbReference type="NCBI Taxonomy" id="3702"/>
    <lineage>
        <taxon>Eukaryota</taxon>
        <taxon>Viridiplantae</taxon>
        <taxon>Streptophyta</taxon>
        <taxon>Embryophyta</taxon>
        <taxon>Tracheophyta</taxon>
        <taxon>Spermatophyta</taxon>
        <taxon>Magnoliopsida</taxon>
        <taxon>eudicotyledons</taxon>
        <taxon>Gunneridae</taxon>
        <taxon>Pentapetalae</taxon>
        <taxon>rosids</taxon>
        <taxon>malvids</taxon>
        <taxon>Brassicales</taxon>
        <taxon>Brassicaceae</taxon>
        <taxon>Camelineae</taxon>
        <taxon>Arabidopsis</taxon>
    </lineage>
</organism>
<sequence length="216" mass="24346">MAINRIAHGSLFLTVVLFFLTVNYGEAIWLTIPTTGGTKCVSEEIQSNVVVLADYYVVDEHNPENTPAVSSKVTSPYGNNLHHQENVTHGQFAFTTQEAGNYLACFWIDSSHHLANPITLGVDWKMGIAAKDWDSVAKKEKIEGVELQLRRLEGLVLSIRENLNYIKDREAEMREVSETTNSRVAWFSIMSLGVCVVVVGSQILYLKRYFHKKKLI</sequence>
<dbReference type="EMBL" id="AC013482">
    <property type="protein sequence ID" value="AAF16541.1"/>
    <property type="status" value="ALT_SEQ"/>
    <property type="molecule type" value="Genomic_DNA"/>
</dbReference>
<dbReference type="EMBL" id="CP002684">
    <property type="protein sequence ID" value="AEE30170.1"/>
    <property type="molecule type" value="Genomic_DNA"/>
</dbReference>
<dbReference type="EMBL" id="AY092996">
    <property type="protein sequence ID" value="AAM12995.1"/>
    <property type="molecule type" value="mRNA"/>
</dbReference>
<dbReference type="EMBL" id="AY114612">
    <property type="protein sequence ID" value="AAM47931.1"/>
    <property type="molecule type" value="mRNA"/>
</dbReference>
<dbReference type="PIR" id="C86352">
    <property type="entry name" value="C86352"/>
</dbReference>
<dbReference type="SMR" id="Q8RWM6"/>
<dbReference type="BioGRID" id="24031">
    <property type="interactions" value="4"/>
</dbReference>
<dbReference type="FunCoup" id="Q8RWM6">
    <property type="interactions" value="4065"/>
</dbReference>
<dbReference type="STRING" id="3702.Q8RWM6"/>
<dbReference type="GlyGen" id="Q8RWM6">
    <property type="glycosylation" value="1 site"/>
</dbReference>
<dbReference type="PaxDb" id="3702-AT1G21900.1"/>
<dbReference type="ProteomicsDB" id="248681"/>
<dbReference type="EnsemblPlants" id="AT1G21900.1">
    <property type="protein sequence ID" value="AT1G21900.1"/>
    <property type="gene ID" value="AT1G21900"/>
</dbReference>
<dbReference type="GeneID" id="838792"/>
<dbReference type="Gramene" id="AT1G21900.1">
    <property type="protein sequence ID" value="AT1G21900.1"/>
    <property type="gene ID" value="AT1G21900"/>
</dbReference>
<dbReference type="KEGG" id="ath:AT1G21900"/>
<dbReference type="Araport" id="AT1G21900"/>
<dbReference type="TAIR" id="AT1G21900">
    <property type="gene designation" value="P24DELTA5"/>
</dbReference>
<dbReference type="eggNOG" id="KOG1691">
    <property type="taxonomic scope" value="Eukaryota"/>
</dbReference>
<dbReference type="HOGENOM" id="CLU_066963_3_2_1"/>
<dbReference type="InParanoid" id="Q8RWM6"/>
<dbReference type="OMA" id="FWVDSTH"/>
<dbReference type="PhylomeDB" id="Q8RWM6"/>
<dbReference type="PRO" id="PR:Q8RWM6"/>
<dbReference type="Proteomes" id="UP000006548">
    <property type="component" value="Chromosome 1"/>
</dbReference>
<dbReference type="ExpressionAtlas" id="Q8RWM6">
    <property type="expression patterns" value="baseline and differential"/>
</dbReference>
<dbReference type="GO" id="GO:0005801">
    <property type="term" value="C:cis-Golgi network"/>
    <property type="evidence" value="ECO:0000314"/>
    <property type="project" value="TAIR"/>
</dbReference>
<dbReference type="GO" id="GO:0030134">
    <property type="term" value="C:COPII-coated ER to Golgi transport vesicle"/>
    <property type="evidence" value="ECO:0000314"/>
    <property type="project" value="TAIR"/>
</dbReference>
<dbReference type="GO" id="GO:0005783">
    <property type="term" value="C:endoplasmic reticulum"/>
    <property type="evidence" value="ECO:0007005"/>
    <property type="project" value="TAIR"/>
</dbReference>
<dbReference type="GO" id="GO:0005789">
    <property type="term" value="C:endoplasmic reticulum membrane"/>
    <property type="evidence" value="ECO:0000314"/>
    <property type="project" value="UniProtKB"/>
</dbReference>
<dbReference type="GO" id="GO:0015031">
    <property type="term" value="P:protein transport"/>
    <property type="evidence" value="ECO:0007669"/>
    <property type="project" value="UniProtKB-KW"/>
</dbReference>
<dbReference type="GO" id="GO:0016192">
    <property type="term" value="P:vesicle-mediated transport"/>
    <property type="evidence" value="ECO:0007669"/>
    <property type="project" value="UniProtKB-KW"/>
</dbReference>
<dbReference type="InterPro" id="IPR015720">
    <property type="entry name" value="Emp24-like"/>
</dbReference>
<dbReference type="InterPro" id="IPR009038">
    <property type="entry name" value="GOLD_dom"/>
</dbReference>
<dbReference type="PANTHER" id="PTHR22811">
    <property type="entry name" value="TRANSMEMBRANE EMP24 DOMAIN-CONTAINING PROTEIN"/>
    <property type="match status" value="1"/>
</dbReference>
<dbReference type="Pfam" id="PF01105">
    <property type="entry name" value="EMP24_GP25L"/>
    <property type="match status" value="1"/>
</dbReference>
<dbReference type="SMART" id="SM01190">
    <property type="entry name" value="EMP24_GP25L"/>
    <property type="match status" value="1"/>
</dbReference>
<dbReference type="PROSITE" id="PS50866">
    <property type="entry name" value="GOLD"/>
    <property type="match status" value="1"/>
</dbReference>
<proteinExistence type="evidence at protein level"/>
<evidence type="ECO:0000250" key="1"/>
<evidence type="ECO:0000255" key="2"/>
<evidence type="ECO:0000255" key="3">
    <source>
        <dbReference type="PROSITE-ProRule" id="PRU00096"/>
    </source>
</evidence>
<evidence type="ECO:0000269" key="4">
    <source>
    </source>
</evidence>
<evidence type="ECO:0000269" key="5">
    <source>
    </source>
</evidence>
<evidence type="ECO:0000269" key="6">
    <source>
    </source>
</evidence>
<evidence type="ECO:0000305" key="7"/>
<keyword id="KW-0175">Coiled coil</keyword>
<keyword id="KW-0256">Endoplasmic reticulum</keyword>
<keyword id="KW-0931">ER-Golgi transport</keyword>
<keyword id="KW-0325">Glycoprotein</keyword>
<keyword id="KW-0472">Membrane</keyword>
<keyword id="KW-0488">Methylation</keyword>
<keyword id="KW-0653">Protein transport</keyword>
<keyword id="KW-1185">Reference proteome</keyword>
<keyword id="KW-0732">Signal</keyword>
<keyword id="KW-0812">Transmembrane</keyword>
<keyword id="KW-1133">Transmembrane helix</keyword>
<keyword id="KW-0813">Transport</keyword>
<gene>
    <name type="ordered locus">At1g21900</name>
    <name type="ORF">T26F17.12</name>
</gene>
<name>P24D5_ARATH</name>
<comment type="function">
    <text evidence="1 6">Involved in vesicular protein trafficking. Mainly functions in the early secretory pathway. Thought to act as cargo receptor at the lumenal side for incorporation of secretory cargo molecules into transport vesicles and to be involved in vesicle coat formation at the cytoplasmic side (By similarity). Interacts with p24beta2 at endoplasmic reticulum export sites for endoplasmic reticulum exit and coupled transport to the Golgi apparatus. Once in the Golgi, interacts very efficiently with the COPI machinery for retrograde transport back to the endoplasmic reticulum.</text>
</comment>
<comment type="subunit">
    <text evidence="1 6">Probably oligomerizes with other members of the EMP24/GP25L family (By similarity). Associates with the COPI vesicle coat (coatomer) (By similarity). Associates with the COPII vesicle coat (coatomer) (By similarity). Interacts with p24beta2.</text>
</comment>
<comment type="subcellular location">
    <subcellularLocation>
        <location evidence="4 5 6">Endoplasmic reticulum membrane</location>
        <topology evidence="4 5 6">Single-pass type I membrane protein</topology>
    </subcellularLocation>
    <text>Cycles between the endoplasmic reticulum and Golgi via COPI and COPII dependent pathways. Mainly located in endoplasmic reticulum.</text>
</comment>
<comment type="domain">
    <text evidence="4">The cytoplasmic C-terminal domain contains a functional dilysine-retrieval motif, which is involved in the retrograde Golgi-to-ER transport of the protein.</text>
</comment>
<comment type="similarity">
    <text evidence="7">Belongs to the EMP24/GP25L family.</text>
</comment>
<comment type="sequence caution" evidence="7">
    <conflict type="erroneous gene model prediction">
        <sequence resource="EMBL-CDS" id="AAF16541"/>
    </conflict>
</comment>
<protein>
    <recommendedName>
        <fullName>Transmembrane emp24 domain-containing protein p24delta5</fullName>
    </recommendedName>
    <alternativeName>
        <fullName>Atp24</fullName>
    </alternativeName>
    <alternativeName>
        <fullName>p24 family protein delta1c</fullName>
        <shortName>p24delta1c</shortName>
    </alternativeName>
    <alternativeName>
        <fullName>p24 family protein delta5</fullName>
        <shortName>p24delta5</shortName>
    </alternativeName>
</protein>
<feature type="signal peptide" evidence="2">
    <location>
        <begin position="1"/>
        <end position="27"/>
    </location>
</feature>
<feature type="chain" id="PRO_0000419785" description="Transmembrane emp24 domain-containing protein p24delta5">
    <location>
        <begin position="28"/>
        <end position="216"/>
    </location>
</feature>
<feature type="topological domain" description="Lumenal" evidence="2">
    <location>
        <begin position="28"/>
        <end position="183"/>
    </location>
</feature>
<feature type="transmembrane region" description="Helical" evidence="2">
    <location>
        <begin position="184"/>
        <end position="204"/>
    </location>
</feature>
<feature type="topological domain" description="Cytoplasmic" evidence="2">
    <location>
        <begin position="205"/>
        <end position="216"/>
    </location>
</feature>
<feature type="domain" description="GOLD" evidence="3">
    <location>
        <begin position="38"/>
        <end position="151"/>
    </location>
</feature>
<feature type="coiled-coil region" evidence="2">
    <location>
        <begin position="137"/>
        <end position="159"/>
    </location>
</feature>
<feature type="short sequence motif" description="COPI vesicle coat-binding" evidence="1">
    <location>
        <begin position="209"/>
        <end position="216"/>
    </location>
</feature>
<feature type="short sequence motif" description="COPII vesicle coat-binding" evidence="1">
    <location>
        <begin position="209"/>
        <end position="210"/>
    </location>
</feature>
<feature type="modified residue" description="Omega-N-methylated arginine" evidence="1">
    <location>
        <position position="169"/>
    </location>
</feature>
<feature type="modified residue" description="Omega-N-methylated arginine" evidence="1">
    <location>
        <position position="174"/>
    </location>
</feature>
<feature type="glycosylation site" description="N-linked (GlcNAc...) asparagine" evidence="2">
    <location>
        <position position="86"/>
    </location>
</feature>
<feature type="mutagenesis site" description="Does not affect the subcellular location." evidence="4">
    <original>YF</original>
    <variation>AA</variation>
    <location>
        <begin position="209"/>
        <end position="210"/>
    </location>
</feature>
<feature type="mutagenesis site" description="Redirection of the subcellular location from the endoplasmic reticulum to the prevacuolar compartment (PVC), the vacuole and the plasma membrane." evidence="4">
    <original>KK</original>
    <variation>SS</variation>
    <location>
        <begin position="213"/>
        <end position="214"/>
    </location>
</feature>
<reference key="1">
    <citation type="journal article" date="2000" name="Nature">
        <title>Sequence and analysis of chromosome 1 of the plant Arabidopsis thaliana.</title>
        <authorList>
            <person name="Theologis A."/>
            <person name="Ecker J.R."/>
            <person name="Palm C.J."/>
            <person name="Federspiel N.A."/>
            <person name="Kaul S."/>
            <person name="White O."/>
            <person name="Alonso J."/>
            <person name="Altafi H."/>
            <person name="Araujo R."/>
            <person name="Bowman C.L."/>
            <person name="Brooks S.Y."/>
            <person name="Buehler E."/>
            <person name="Chan A."/>
            <person name="Chao Q."/>
            <person name="Chen H."/>
            <person name="Cheuk R.F."/>
            <person name="Chin C.W."/>
            <person name="Chung M.K."/>
            <person name="Conn L."/>
            <person name="Conway A.B."/>
            <person name="Conway A.R."/>
            <person name="Creasy T.H."/>
            <person name="Dewar K."/>
            <person name="Dunn P."/>
            <person name="Etgu P."/>
            <person name="Feldblyum T.V."/>
            <person name="Feng J.-D."/>
            <person name="Fong B."/>
            <person name="Fujii C.Y."/>
            <person name="Gill J.E."/>
            <person name="Goldsmith A.D."/>
            <person name="Haas B."/>
            <person name="Hansen N.F."/>
            <person name="Hughes B."/>
            <person name="Huizar L."/>
            <person name="Hunter J.L."/>
            <person name="Jenkins J."/>
            <person name="Johnson-Hopson C."/>
            <person name="Khan S."/>
            <person name="Khaykin E."/>
            <person name="Kim C.J."/>
            <person name="Koo H.L."/>
            <person name="Kremenetskaia I."/>
            <person name="Kurtz D.B."/>
            <person name="Kwan A."/>
            <person name="Lam B."/>
            <person name="Langin-Hooper S."/>
            <person name="Lee A."/>
            <person name="Lee J.M."/>
            <person name="Lenz C.A."/>
            <person name="Li J.H."/>
            <person name="Li Y.-P."/>
            <person name="Lin X."/>
            <person name="Liu S.X."/>
            <person name="Liu Z.A."/>
            <person name="Luros J.S."/>
            <person name="Maiti R."/>
            <person name="Marziali A."/>
            <person name="Militscher J."/>
            <person name="Miranda M."/>
            <person name="Nguyen M."/>
            <person name="Nierman W.C."/>
            <person name="Osborne B.I."/>
            <person name="Pai G."/>
            <person name="Peterson J."/>
            <person name="Pham P.K."/>
            <person name="Rizzo M."/>
            <person name="Rooney T."/>
            <person name="Rowley D."/>
            <person name="Sakano H."/>
            <person name="Salzberg S.L."/>
            <person name="Schwartz J.R."/>
            <person name="Shinn P."/>
            <person name="Southwick A.M."/>
            <person name="Sun H."/>
            <person name="Tallon L.J."/>
            <person name="Tambunga G."/>
            <person name="Toriumi M.J."/>
            <person name="Town C.D."/>
            <person name="Utterback T."/>
            <person name="Van Aken S."/>
            <person name="Vaysberg M."/>
            <person name="Vysotskaia V.S."/>
            <person name="Walker M."/>
            <person name="Wu D."/>
            <person name="Yu G."/>
            <person name="Fraser C.M."/>
            <person name="Venter J.C."/>
            <person name="Davis R.W."/>
        </authorList>
    </citation>
    <scope>NUCLEOTIDE SEQUENCE [LARGE SCALE GENOMIC DNA]</scope>
    <source>
        <strain>cv. Columbia</strain>
    </source>
</reference>
<reference key="2">
    <citation type="journal article" date="2017" name="Plant J.">
        <title>Araport11: a complete reannotation of the Arabidopsis thaliana reference genome.</title>
        <authorList>
            <person name="Cheng C.Y."/>
            <person name="Krishnakumar V."/>
            <person name="Chan A.P."/>
            <person name="Thibaud-Nissen F."/>
            <person name="Schobel S."/>
            <person name="Town C.D."/>
        </authorList>
    </citation>
    <scope>GENOME REANNOTATION</scope>
    <source>
        <strain>cv. Columbia</strain>
    </source>
</reference>
<reference key="3">
    <citation type="journal article" date="2003" name="Science">
        <title>Empirical analysis of transcriptional activity in the Arabidopsis genome.</title>
        <authorList>
            <person name="Yamada K."/>
            <person name="Lim J."/>
            <person name="Dale J.M."/>
            <person name="Chen H."/>
            <person name="Shinn P."/>
            <person name="Palm C.J."/>
            <person name="Southwick A.M."/>
            <person name="Wu H.C."/>
            <person name="Kim C.J."/>
            <person name="Nguyen M."/>
            <person name="Pham P.K."/>
            <person name="Cheuk R.F."/>
            <person name="Karlin-Newmann G."/>
            <person name="Liu S.X."/>
            <person name="Lam B."/>
            <person name="Sakano H."/>
            <person name="Wu T."/>
            <person name="Yu G."/>
            <person name="Miranda M."/>
            <person name="Quach H.L."/>
            <person name="Tripp M."/>
            <person name="Chang C.H."/>
            <person name="Lee J.M."/>
            <person name="Toriumi M.J."/>
            <person name="Chan M.M."/>
            <person name="Tang C.C."/>
            <person name="Onodera C.S."/>
            <person name="Deng J.M."/>
            <person name="Akiyama K."/>
            <person name="Ansari Y."/>
            <person name="Arakawa T."/>
            <person name="Banh J."/>
            <person name="Banno F."/>
            <person name="Bowser L."/>
            <person name="Brooks S.Y."/>
            <person name="Carninci P."/>
            <person name="Chao Q."/>
            <person name="Choy N."/>
            <person name="Enju A."/>
            <person name="Goldsmith A.D."/>
            <person name="Gurjal M."/>
            <person name="Hansen N.F."/>
            <person name="Hayashizaki Y."/>
            <person name="Johnson-Hopson C."/>
            <person name="Hsuan V.W."/>
            <person name="Iida K."/>
            <person name="Karnes M."/>
            <person name="Khan S."/>
            <person name="Koesema E."/>
            <person name="Ishida J."/>
            <person name="Jiang P.X."/>
            <person name="Jones T."/>
            <person name="Kawai J."/>
            <person name="Kamiya A."/>
            <person name="Meyers C."/>
            <person name="Nakajima M."/>
            <person name="Narusaka M."/>
            <person name="Seki M."/>
            <person name="Sakurai T."/>
            <person name="Satou M."/>
            <person name="Tamse R."/>
            <person name="Vaysberg M."/>
            <person name="Wallender E.K."/>
            <person name="Wong C."/>
            <person name="Yamamura Y."/>
            <person name="Yuan S."/>
            <person name="Shinozaki K."/>
            <person name="Davis R.W."/>
            <person name="Theologis A."/>
            <person name="Ecker J.R."/>
        </authorList>
    </citation>
    <scope>NUCLEOTIDE SEQUENCE [LARGE SCALE MRNA]</scope>
    <source>
        <strain>cv. Columbia</strain>
    </source>
</reference>
<reference key="4">
    <citation type="journal article" date="2008" name="Traffic">
        <title>In vivo trafficking and localization of p24 proteins in plant cells.</title>
        <authorList>
            <person name="Langhans M."/>
            <person name="Marcote M.J."/>
            <person name="Pimpl P."/>
            <person name="Virgili-Lopez G."/>
            <person name="Robinson D.G."/>
            <person name="Aniento F."/>
        </authorList>
    </citation>
    <scope>SUBCELLULAR LOCATION</scope>
    <scope>DOMAIN</scope>
    <scope>MUTAGENESIS OF 209-TYR-PHE-210 AND 213-LYS-LYS-214</scope>
</reference>
<reference key="5">
    <citation type="journal article" date="2012" name="J. Exp. Bot.">
        <title>Coupled transport of Arabidopsis p24 proteins at the ER-Golgi interface.</title>
        <authorList>
            <person name="Montesinos J.C."/>
            <person name="Sturm S."/>
            <person name="Langhans M."/>
            <person name="Hillmer S."/>
            <person name="Marcote M.J."/>
            <person name="Robinson D.G."/>
            <person name="Aniento F."/>
        </authorList>
    </citation>
    <scope>GENE FAMILY</scope>
    <scope>NOMENCLATURE</scope>
    <scope>SUBCELLULAR LOCATION</scope>
    <scope>INTERACTION WITH P24BETA2</scope>
    <scope>FUNCTION</scope>
</reference>
<reference key="6">
    <citation type="journal article" date="2012" name="Traffic">
        <title>Subclass-specific localization and trafficking of Arabidopsis p24 proteins in the ER-Golgi interface.</title>
        <authorList>
            <person name="Chen J."/>
            <person name="Qi X."/>
            <person name="Zheng H."/>
        </authorList>
    </citation>
    <scope>GENE FAMILY</scope>
    <scope>SUBCELLULAR LOCATION</scope>
    <scope>COILED-COIL DOMAIN</scope>
</reference>